<feature type="signal peptide" evidence="1">
    <location>
        <begin position="1"/>
        <end position="17"/>
    </location>
</feature>
<feature type="chain" id="PRO_0000268619" description="Uncharacterized lipoprotein YsaB">
    <location>
        <begin position="18"/>
        <end position="99"/>
    </location>
</feature>
<feature type="lipid moiety-binding region" description="N-palmitoyl cysteine" evidence="1">
    <location>
        <position position="18"/>
    </location>
</feature>
<feature type="lipid moiety-binding region" description="S-diacylglycerol cysteine" evidence="1">
    <location>
        <position position="18"/>
    </location>
</feature>
<keyword id="KW-1003">Cell membrane</keyword>
<keyword id="KW-0449">Lipoprotein</keyword>
<keyword id="KW-0472">Membrane</keyword>
<keyword id="KW-0564">Palmitate</keyword>
<keyword id="KW-1185">Reference proteome</keyword>
<keyword id="KW-0732">Signal</keyword>
<sequence>MMMNAFFPAMALMVLVGCSTPSPVQKAQRVRVDPLRSLNMEALCKDQAAKRYNTGEQKIDVTAFEQFQGSYEMRGYTFRKEQFVCSFDADGHFLHLSMR</sequence>
<comment type="subcellular location">
    <subcellularLocation>
        <location evidence="2">Cell membrane</location>
        <topology evidence="2">Lipid-anchor</topology>
    </subcellularLocation>
</comment>
<reference key="1">
    <citation type="journal article" date="2002" name="Nucleic Acids Res.">
        <title>Genome sequence of Shigella flexneri 2a: insights into pathogenicity through comparison with genomes of Escherichia coli K12 and O157.</title>
        <authorList>
            <person name="Jin Q."/>
            <person name="Yuan Z."/>
            <person name="Xu J."/>
            <person name="Wang Y."/>
            <person name="Shen Y."/>
            <person name="Lu W."/>
            <person name="Wang J."/>
            <person name="Liu H."/>
            <person name="Yang J."/>
            <person name="Yang F."/>
            <person name="Zhang X."/>
            <person name="Zhang J."/>
            <person name="Yang G."/>
            <person name="Wu H."/>
            <person name="Qu D."/>
            <person name="Dong J."/>
            <person name="Sun L."/>
            <person name="Xue Y."/>
            <person name="Zhao A."/>
            <person name="Gao Y."/>
            <person name="Zhu J."/>
            <person name="Kan B."/>
            <person name="Ding K."/>
            <person name="Chen S."/>
            <person name="Cheng H."/>
            <person name="Yao Z."/>
            <person name="He B."/>
            <person name="Chen R."/>
            <person name="Ma D."/>
            <person name="Qiang B."/>
            <person name="Wen Y."/>
            <person name="Hou Y."/>
            <person name="Yu J."/>
        </authorList>
    </citation>
    <scope>NUCLEOTIDE SEQUENCE [LARGE SCALE GENOMIC DNA]</scope>
    <source>
        <strain>301 / Serotype 2a</strain>
    </source>
</reference>
<reference key="2">
    <citation type="journal article" date="2003" name="Infect. Immun.">
        <title>Complete genome sequence and comparative genomics of Shigella flexneri serotype 2a strain 2457T.</title>
        <authorList>
            <person name="Wei J."/>
            <person name="Goldberg M.B."/>
            <person name="Burland V."/>
            <person name="Venkatesan M.M."/>
            <person name="Deng W."/>
            <person name="Fournier G."/>
            <person name="Mayhew G.F."/>
            <person name="Plunkett G. III"/>
            <person name="Rose D.J."/>
            <person name="Darling A."/>
            <person name="Mau B."/>
            <person name="Perna N.T."/>
            <person name="Payne S.M."/>
            <person name="Runyen-Janecky L.J."/>
            <person name="Zhou S."/>
            <person name="Schwartz D.C."/>
            <person name="Blattner F.R."/>
        </authorList>
    </citation>
    <scope>NUCLEOTIDE SEQUENCE [LARGE SCALE GENOMIC DNA]</scope>
    <source>
        <strain>ATCC 700930 / 2457T / Serotype 2a</strain>
    </source>
</reference>
<name>YSAB_SHIFL</name>
<gene>
    <name type="primary">ysaB</name>
    <name type="ordered locus">SF3604</name>
    <name type="ordered locus">S4164.1</name>
</gene>
<evidence type="ECO:0000255" key="1"/>
<evidence type="ECO:0000305" key="2"/>
<accession>Q83J37</accession>
<proteinExistence type="inferred from homology"/>
<dbReference type="EMBL" id="AE005674">
    <property type="protein sequence ID" value="AAN45054.1"/>
    <property type="molecule type" value="Genomic_DNA"/>
</dbReference>
<dbReference type="EMBL" id="AE014073">
    <property type="status" value="NOT_ANNOTATED_CDS"/>
    <property type="molecule type" value="Genomic_DNA"/>
</dbReference>
<dbReference type="RefSeq" id="NP_709347.1">
    <property type="nucleotide sequence ID" value="NC_004337.2"/>
</dbReference>
<dbReference type="RefSeq" id="WP_000980116.1">
    <property type="nucleotide sequence ID" value="NZ_WPGW01000060.1"/>
</dbReference>
<dbReference type="STRING" id="198214.SF3604"/>
<dbReference type="PaxDb" id="198214-SF3604"/>
<dbReference type="GeneID" id="1025234"/>
<dbReference type="KEGG" id="sfl:SF3604"/>
<dbReference type="PATRIC" id="fig|198214.7.peg.4255"/>
<dbReference type="HOGENOM" id="CLU_162515_0_0_6"/>
<dbReference type="Proteomes" id="UP000001006">
    <property type="component" value="Chromosome"/>
</dbReference>
<dbReference type="Proteomes" id="UP000002673">
    <property type="component" value="Chromosome"/>
</dbReference>
<dbReference type="GO" id="GO:0005886">
    <property type="term" value="C:plasma membrane"/>
    <property type="evidence" value="ECO:0007669"/>
    <property type="project" value="UniProtKB-SubCell"/>
</dbReference>
<dbReference type="InterPro" id="IPR025728">
    <property type="entry name" value="YsaB-like"/>
</dbReference>
<dbReference type="Pfam" id="PF13983">
    <property type="entry name" value="YsaB"/>
    <property type="match status" value="1"/>
</dbReference>
<protein>
    <recommendedName>
        <fullName>Uncharacterized lipoprotein YsaB</fullName>
    </recommendedName>
</protein>
<organism>
    <name type="scientific">Shigella flexneri</name>
    <dbReference type="NCBI Taxonomy" id="623"/>
    <lineage>
        <taxon>Bacteria</taxon>
        <taxon>Pseudomonadati</taxon>
        <taxon>Pseudomonadota</taxon>
        <taxon>Gammaproteobacteria</taxon>
        <taxon>Enterobacterales</taxon>
        <taxon>Enterobacteriaceae</taxon>
        <taxon>Shigella</taxon>
    </lineage>
</organism>